<reference key="1">
    <citation type="journal article" date="2000" name="Nature">
        <title>Sequence and analysis of chromosome 1 of the plant Arabidopsis thaliana.</title>
        <authorList>
            <person name="Theologis A."/>
            <person name="Ecker J.R."/>
            <person name="Palm C.J."/>
            <person name="Federspiel N.A."/>
            <person name="Kaul S."/>
            <person name="White O."/>
            <person name="Alonso J."/>
            <person name="Altafi H."/>
            <person name="Araujo R."/>
            <person name="Bowman C.L."/>
            <person name="Brooks S.Y."/>
            <person name="Buehler E."/>
            <person name="Chan A."/>
            <person name="Chao Q."/>
            <person name="Chen H."/>
            <person name="Cheuk R.F."/>
            <person name="Chin C.W."/>
            <person name="Chung M.K."/>
            <person name="Conn L."/>
            <person name="Conway A.B."/>
            <person name="Conway A.R."/>
            <person name="Creasy T.H."/>
            <person name="Dewar K."/>
            <person name="Dunn P."/>
            <person name="Etgu P."/>
            <person name="Feldblyum T.V."/>
            <person name="Feng J.-D."/>
            <person name="Fong B."/>
            <person name="Fujii C.Y."/>
            <person name="Gill J.E."/>
            <person name="Goldsmith A.D."/>
            <person name="Haas B."/>
            <person name="Hansen N.F."/>
            <person name="Hughes B."/>
            <person name="Huizar L."/>
            <person name="Hunter J.L."/>
            <person name="Jenkins J."/>
            <person name="Johnson-Hopson C."/>
            <person name="Khan S."/>
            <person name="Khaykin E."/>
            <person name="Kim C.J."/>
            <person name="Koo H.L."/>
            <person name="Kremenetskaia I."/>
            <person name="Kurtz D.B."/>
            <person name="Kwan A."/>
            <person name="Lam B."/>
            <person name="Langin-Hooper S."/>
            <person name="Lee A."/>
            <person name="Lee J.M."/>
            <person name="Lenz C.A."/>
            <person name="Li J.H."/>
            <person name="Li Y.-P."/>
            <person name="Lin X."/>
            <person name="Liu S.X."/>
            <person name="Liu Z.A."/>
            <person name="Luros J.S."/>
            <person name="Maiti R."/>
            <person name="Marziali A."/>
            <person name="Militscher J."/>
            <person name="Miranda M."/>
            <person name="Nguyen M."/>
            <person name="Nierman W.C."/>
            <person name="Osborne B.I."/>
            <person name="Pai G."/>
            <person name="Peterson J."/>
            <person name="Pham P.K."/>
            <person name="Rizzo M."/>
            <person name="Rooney T."/>
            <person name="Rowley D."/>
            <person name="Sakano H."/>
            <person name="Salzberg S.L."/>
            <person name="Schwartz J.R."/>
            <person name="Shinn P."/>
            <person name="Southwick A.M."/>
            <person name="Sun H."/>
            <person name="Tallon L.J."/>
            <person name="Tambunga G."/>
            <person name="Toriumi M.J."/>
            <person name="Town C.D."/>
            <person name="Utterback T."/>
            <person name="Van Aken S."/>
            <person name="Vaysberg M."/>
            <person name="Vysotskaia V.S."/>
            <person name="Walker M."/>
            <person name="Wu D."/>
            <person name="Yu G."/>
            <person name="Fraser C.M."/>
            <person name="Venter J.C."/>
            <person name="Davis R.W."/>
        </authorList>
    </citation>
    <scope>NUCLEOTIDE SEQUENCE [LARGE SCALE GENOMIC DNA]</scope>
    <source>
        <strain>cv. Columbia</strain>
    </source>
</reference>
<reference key="2">
    <citation type="journal article" date="2017" name="Plant J.">
        <title>Araport11: a complete reannotation of the Arabidopsis thaliana reference genome.</title>
        <authorList>
            <person name="Cheng C.Y."/>
            <person name="Krishnakumar V."/>
            <person name="Chan A.P."/>
            <person name="Thibaud-Nissen F."/>
            <person name="Schobel S."/>
            <person name="Town C.D."/>
        </authorList>
    </citation>
    <scope>GENOME REANNOTATION</scope>
    <source>
        <strain>cv. Columbia</strain>
    </source>
</reference>
<reference key="3">
    <citation type="journal article" date="2005" name="Plant Physiol.">
        <title>Genome organization of more than 300 defensin-like genes in Arabidopsis.</title>
        <authorList>
            <person name="Silverstein K.A.T."/>
            <person name="Graham M.A."/>
            <person name="Paape T.D."/>
            <person name="VandenBosch K.A."/>
        </authorList>
    </citation>
    <scope>GENE FAMILY</scope>
</reference>
<name>DF263_ARATH</name>
<keyword id="KW-0929">Antimicrobial</keyword>
<keyword id="KW-1015">Disulfide bond</keyword>
<keyword id="KW-0295">Fungicide</keyword>
<keyword id="KW-0611">Plant defense</keyword>
<keyword id="KW-1185">Reference proteome</keyword>
<keyword id="KW-0964">Secreted</keyword>
<keyword id="KW-0732">Signal</keyword>
<proteinExistence type="inferred from homology"/>
<accession>Q2V4D9</accession>
<feature type="signal peptide" evidence="2">
    <location>
        <begin position="1"/>
        <end position="26"/>
    </location>
</feature>
<feature type="chain" id="PRO_0000379725" description="Putative defensin-like protein 263">
    <location>
        <begin position="27"/>
        <end position="96"/>
    </location>
</feature>
<feature type="disulfide bond" evidence="1">
    <location>
        <begin position="48"/>
        <end position="96"/>
    </location>
</feature>
<feature type="disulfide bond" evidence="1">
    <location>
        <begin position="67"/>
        <end position="86"/>
    </location>
</feature>
<feature type="disulfide bond" evidence="1">
    <location>
        <begin position="73"/>
        <end position="91"/>
    </location>
</feature>
<feature type="disulfide bond" evidence="1">
    <location>
        <begin position="77"/>
        <end position="93"/>
    </location>
</feature>
<dbReference type="EMBL" id="AC011665">
    <property type="status" value="NOT_ANNOTATED_CDS"/>
    <property type="molecule type" value="Genomic_DNA"/>
</dbReference>
<dbReference type="EMBL" id="CP002684">
    <property type="protein sequence ID" value="AEE34857.1"/>
    <property type="molecule type" value="Genomic_DNA"/>
</dbReference>
<dbReference type="RefSeq" id="NP_001031254.1">
    <property type="nucleotide sequence ID" value="NM_001036177.2"/>
</dbReference>
<dbReference type="SMR" id="Q2V4D9"/>
<dbReference type="STRING" id="3702.Q2V4D9"/>
<dbReference type="PaxDb" id="3702-AT1G68907.1"/>
<dbReference type="EnsemblPlants" id="AT1G68907.1">
    <property type="protein sequence ID" value="AT1G68907.1"/>
    <property type="gene ID" value="AT1G68907"/>
</dbReference>
<dbReference type="GeneID" id="3767669"/>
<dbReference type="Gramene" id="AT1G68907.1">
    <property type="protein sequence ID" value="AT1G68907.1"/>
    <property type="gene ID" value="AT1G68907"/>
</dbReference>
<dbReference type="KEGG" id="ath:AT1G68907"/>
<dbReference type="Araport" id="AT1G68907"/>
<dbReference type="TAIR" id="AT1G68907"/>
<dbReference type="HOGENOM" id="CLU_2375699_0_0_1"/>
<dbReference type="InParanoid" id="Q2V4D9"/>
<dbReference type="OMA" id="NCEAPIM"/>
<dbReference type="PhylomeDB" id="Q2V4D9"/>
<dbReference type="PRO" id="PR:Q2V4D9"/>
<dbReference type="Proteomes" id="UP000006548">
    <property type="component" value="Chromosome 1"/>
</dbReference>
<dbReference type="ExpressionAtlas" id="Q2V4D9">
    <property type="expression patterns" value="baseline and differential"/>
</dbReference>
<dbReference type="GO" id="GO:0005576">
    <property type="term" value="C:extracellular region"/>
    <property type="evidence" value="ECO:0007669"/>
    <property type="project" value="UniProtKB-SubCell"/>
</dbReference>
<dbReference type="GO" id="GO:0050832">
    <property type="term" value="P:defense response to fungus"/>
    <property type="evidence" value="ECO:0007669"/>
    <property type="project" value="UniProtKB-KW"/>
</dbReference>
<dbReference type="GO" id="GO:0031640">
    <property type="term" value="P:killing of cells of another organism"/>
    <property type="evidence" value="ECO:0007669"/>
    <property type="project" value="UniProtKB-KW"/>
</dbReference>
<comment type="subcellular location">
    <subcellularLocation>
        <location evidence="1">Secreted</location>
    </subcellularLocation>
</comment>
<comment type="similarity">
    <text evidence="3">Belongs to the DEFL family.</text>
</comment>
<gene>
    <name type="ordered locus">At1g68907</name>
    <name type="ORF">T6L1</name>
</gene>
<evidence type="ECO:0000250" key="1"/>
<evidence type="ECO:0000255" key="2"/>
<evidence type="ECO:0000305" key="3"/>
<protein>
    <recommendedName>
        <fullName>Putative defensin-like protein 263</fullName>
    </recommendedName>
</protein>
<sequence>MEKTSLKLVFLFSLTVIALCLSLSAAREMAKEEVNCIGGHCPDGKKDCNCLPLIAPTMDIYETNESCRTDNECIKYCPKGCKIVDCNFGTCLCEYC</sequence>
<organism>
    <name type="scientific">Arabidopsis thaliana</name>
    <name type="common">Mouse-ear cress</name>
    <dbReference type="NCBI Taxonomy" id="3702"/>
    <lineage>
        <taxon>Eukaryota</taxon>
        <taxon>Viridiplantae</taxon>
        <taxon>Streptophyta</taxon>
        <taxon>Embryophyta</taxon>
        <taxon>Tracheophyta</taxon>
        <taxon>Spermatophyta</taxon>
        <taxon>Magnoliopsida</taxon>
        <taxon>eudicotyledons</taxon>
        <taxon>Gunneridae</taxon>
        <taxon>Pentapetalae</taxon>
        <taxon>rosids</taxon>
        <taxon>malvids</taxon>
        <taxon>Brassicales</taxon>
        <taxon>Brassicaceae</taxon>
        <taxon>Camelineae</taxon>
        <taxon>Arabidopsis</taxon>
    </lineage>
</organism>